<accession>Q9LZI9</accession>
<dbReference type="EC" id="2.5.1.18"/>
<dbReference type="EMBL" id="AL162651">
    <property type="protein sequence ID" value="CAB83126.1"/>
    <property type="molecule type" value="Genomic_DNA"/>
</dbReference>
<dbReference type="EMBL" id="CP002686">
    <property type="protein sequence ID" value="AEE80388.1"/>
    <property type="molecule type" value="Genomic_DNA"/>
</dbReference>
<dbReference type="PIR" id="T48065">
    <property type="entry name" value="T48065"/>
</dbReference>
<dbReference type="SMR" id="Q9LZI9"/>
<dbReference type="FunCoup" id="Q9LZI9">
    <property type="interactions" value="985"/>
</dbReference>
<dbReference type="STRING" id="3702.Q9LZI9"/>
<dbReference type="iPTMnet" id="Q9LZI9"/>
<dbReference type="PaxDb" id="3702-AT3G62760.1"/>
<dbReference type="ProteomicsDB" id="247188"/>
<dbReference type="EnsemblPlants" id="AT3G62760.1">
    <property type="protein sequence ID" value="AT3G62760.1"/>
    <property type="gene ID" value="AT3G62760"/>
</dbReference>
<dbReference type="Gramene" id="AT3G62760.1">
    <property type="protein sequence ID" value="AT3G62760.1"/>
    <property type="gene ID" value="AT3G62760"/>
</dbReference>
<dbReference type="KEGG" id="ath:AT3G62760"/>
<dbReference type="Araport" id="AT3G62760"/>
<dbReference type="TAIR" id="AT3G62760">
    <property type="gene designation" value="ATGSTF13"/>
</dbReference>
<dbReference type="eggNOG" id="KOG0867">
    <property type="taxonomic scope" value="Eukaryota"/>
</dbReference>
<dbReference type="HOGENOM" id="CLU_011226_5_1_1"/>
<dbReference type="InParanoid" id="Q9LZI9"/>
<dbReference type="OMA" id="AWMQRIT"/>
<dbReference type="PhylomeDB" id="Q9LZI9"/>
<dbReference type="BioCyc" id="ARA:AT3G62760-MONOMER"/>
<dbReference type="PRO" id="PR:Q9LZI9"/>
<dbReference type="Proteomes" id="UP000006548">
    <property type="component" value="Chromosome 3"/>
</dbReference>
<dbReference type="ExpressionAtlas" id="Q9LZI9">
    <property type="expression patterns" value="baseline and differential"/>
</dbReference>
<dbReference type="GO" id="GO:0005737">
    <property type="term" value="C:cytoplasm"/>
    <property type="evidence" value="ECO:0000303"/>
    <property type="project" value="TAIR"/>
</dbReference>
<dbReference type="GO" id="GO:0005829">
    <property type="term" value="C:cytosol"/>
    <property type="evidence" value="ECO:0007669"/>
    <property type="project" value="UniProtKB-SubCell"/>
</dbReference>
<dbReference type="GO" id="GO:0004364">
    <property type="term" value="F:glutathione transferase activity"/>
    <property type="evidence" value="ECO:0007669"/>
    <property type="project" value="UniProtKB-EC"/>
</dbReference>
<dbReference type="GO" id="GO:0009407">
    <property type="term" value="P:toxin catabolic process"/>
    <property type="evidence" value="ECO:0000304"/>
    <property type="project" value="TAIR"/>
</dbReference>
<dbReference type="CDD" id="cd03187">
    <property type="entry name" value="GST_C_Phi"/>
    <property type="match status" value="1"/>
</dbReference>
<dbReference type="CDD" id="cd03053">
    <property type="entry name" value="GST_N_Phi"/>
    <property type="match status" value="1"/>
</dbReference>
<dbReference type="FunFam" id="1.20.1050.10:FF:000004">
    <property type="entry name" value="Glutathione S-transferase F2"/>
    <property type="match status" value="1"/>
</dbReference>
<dbReference type="FunFam" id="3.40.30.10:FF:000016">
    <property type="entry name" value="Glutathione S-transferase F2"/>
    <property type="match status" value="1"/>
</dbReference>
<dbReference type="Gene3D" id="1.20.1050.10">
    <property type="match status" value="1"/>
</dbReference>
<dbReference type="Gene3D" id="3.40.30.10">
    <property type="entry name" value="Glutaredoxin"/>
    <property type="match status" value="1"/>
</dbReference>
<dbReference type="InterPro" id="IPR010987">
    <property type="entry name" value="Glutathione-S-Trfase_C-like"/>
</dbReference>
<dbReference type="InterPro" id="IPR036282">
    <property type="entry name" value="Glutathione-S-Trfase_C_sf"/>
</dbReference>
<dbReference type="InterPro" id="IPR004045">
    <property type="entry name" value="Glutathione_S-Trfase_N"/>
</dbReference>
<dbReference type="InterPro" id="IPR004046">
    <property type="entry name" value="GST_C"/>
</dbReference>
<dbReference type="InterPro" id="IPR034347">
    <property type="entry name" value="GST_Phi_C"/>
</dbReference>
<dbReference type="InterPro" id="IPR036249">
    <property type="entry name" value="Thioredoxin-like_sf"/>
</dbReference>
<dbReference type="PANTHER" id="PTHR43900:SF72">
    <property type="entry name" value="GLUTATHIONE S-TRANSFERASE F13"/>
    <property type="match status" value="1"/>
</dbReference>
<dbReference type="PANTHER" id="PTHR43900">
    <property type="entry name" value="GLUTATHIONE S-TRANSFERASE RHO"/>
    <property type="match status" value="1"/>
</dbReference>
<dbReference type="Pfam" id="PF00043">
    <property type="entry name" value="GST_C"/>
    <property type="match status" value="1"/>
</dbReference>
<dbReference type="Pfam" id="PF02798">
    <property type="entry name" value="GST_N"/>
    <property type="match status" value="1"/>
</dbReference>
<dbReference type="SFLD" id="SFLDG01154">
    <property type="entry name" value="Main.5:_Phi-like"/>
    <property type="match status" value="1"/>
</dbReference>
<dbReference type="SFLD" id="SFLDG00358">
    <property type="entry name" value="Main_(cytGST)"/>
    <property type="match status" value="1"/>
</dbReference>
<dbReference type="SUPFAM" id="SSF47616">
    <property type="entry name" value="GST C-terminal domain-like"/>
    <property type="match status" value="1"/>
</dbReference>
<dbReference type="SUPFAM" id="SSF52833">
    <property type="entry name" value="Thioredoxin-like"/>
    <property type="match status" value="1"/>
</dbReference>
<dbReference type="PROSITE" id="PS50405">
    <property type="entry name" value="GST_CTER"/>
    <property type="match status" value="1"/>
</dbReference>
<dbReference type="PROSITE" id="PS50404">
    <property type="entry name" value="GST_NTER"/>
    <property type="match status" value="1"/>
</dbReference>
<name>GSTFD_ARATH</name>
<gene>
    <name type="primary">GSTF13</name>
    <name type="ordered locus">At3g62760</name>
    <name type="ORF">F26K9.190</name>
</gene>
<keyword id="KW-0963">Cytoplasm</keyword>
<keyword id="KW-0216">Detoxification</keyword>
<keyword id="KW-1185">Reference proteome</keyword>
<keyword id="KW-0808">Transferase</keyword>
<sequence>MAMKLYGDEMSACVARVLLCLHEKNTEFELVPVNLFACHHKLPSFLSMNPFGKVPALQDDDLTLFESRAITAYIAEKHRDKGTDLTRHEDPKEAAIVKLWSEVEAHHFNPAISAVIHQLIVVPLQGESPNAAIVEENLENLGKILDVYEERLGKTKYLAGDTYTLADLHHVPYTYYFMKTIHAGLINDRPNVKAWWEDLCSRPAFLKVSPGLTVAPTTN</sequence>
<protein>
    <recommendedName>
        <fullName>Glutathione S-transferase F13</fullName>
        <shortName>AtGSTF13</shortName>
        <ecNumber>2.5.1.18</ecNumber>
    </recommendedName>
    <alternativeName>
        <fullName>GST class-phi member 13</fullName>
    </alternativeName>
</protein>
<proteinExistence type="inferred from homology"/>
<comment type="function">
    <text evidence="1">May be involved in the conjugation of reduced glutathione to a wide number of exogenous and endogenous hydrophobic electrophiles and have a detoxification role against certain herbicides.</text>
</comment>
<comment type="catalytic activity">
    <reaction>
        <text>RX + glutathione = an S-substituted glutathione + a halide anion + H(+)</text>
        <dbReference type="Rhea" id="RHEA:16437"/>
        <dbReference type="ChEBI" id="CHEBI:15378"/>
        <dbReference type="ChEBI" id="CHEBI:16042"/>
        <dbReference type="ChEBI" id="CHEBI:17792"/>
        <dbReference type="ChEBI" id="CHEBI:57925"/>
        <dbReference type="ChEBI" id="CHEBI:90779"/>
        <dbReference type="EC" id="2.5.1.18"/>
    </reaction>
</comment>
<comment type="subcellular location">
    <subcellularLocation>
        <location evidence="2">Cytoplasm</location>
        <location evidence="2">Cytosol</location>
    </subcellularLocation>
</comment>
<comment type="similarity">
    <text evidence="2">Belongs to the GST superfamily. Phi family.</text>
</comment>
<evidence type="ECO:0000250" key="1"/>
<evidence type="ECO:0000305" key="2"/>
<reference key="1">
    <citation type="journal article" date="2000" name="Nature">
        <title>Sequence and analysis of chromosome 3 of the plant Arabidopsis thaliana.</title>
        <authorList>
            <person name="Salanoubat M."/>
            <person name="Lemcke K."/>
            <person name="Rieger M."/>
            <person name="Ansorge W."/>
            <person name="Unseld M."/>
            <person name="Fartmann B."/>
            <person name="Valle G."/>
            <person name="Bloecker H."/>
            <person name="Perez-Alonso M."/>
            <person name="Obermaier B."/>
            <person name="Delseny M."/>
            <person name="Boutry M."/>
            <person name="Grivell L.A."/>
            <person name="Mache R."/>
            <person name="Puigdomenech P."/>
            <person name="De Simone V."/>
            <person name="Choisne N."/>
            <person name="Artiguenave F."/>
            <person name="Robert C."/>
            <person name="Brottier P."/>
            <person name="Wincker P."/>
            <person name="Cattolico L."/>
            <person name="Weissenbach J."/>
            <person name="Saurin W."/>
            <person name="Quetier F."/>
            <person name="Schaefer M."/>
            <person name="Mueller-Auer S."/>
            <person name="Gabel C."/>
            <person name="Fuchs M."/>
            <person name="Benes V."/>
            <person name="Wurmbach E."/>
            <person name="Drzonek H."/>
            <person name="Erfle H."/>
            <person name="Jordan N."/>
            <person name="Bangert S."/>
            <person name="Wiedelmann R."/>
            <person name="Kranz H."/>
            <person name="Voss H."/>
            <person name="Holland R."/>
            <person name="Brandt P."/>
            <person name="Nyakatura G."/>
            <person name="Vezzi A."/>
            <person name="D'Angelo M."/>
            <person name="Pallavicini A."/>
            <person name="Toppo S."/>
            <person name="Simionati B."/>
            <person name="Conrad A."/>
            <person name="Hornischer K."/>
            <person name="Kauer G."/>
            <person name="Loehnert T.-H."/>
            <person name="Nordsiek G."/>
            <person name="Reichelt J."/>
            <person name="Scharfe M."/>
            <person name="Schoen O."/>
            <person name="Bargues M."/>
            <person name="Terol J."/>
            <person name="Climent J."/>
            <person name="Navarro P."/>
            <person name="Collado C."/>
            <person name="Perez-Perez A."/>
            <person name="Ottenwaelder B."/>
            <person name="Duchemin D."/>
            <person name="Cooke R."/>
            <person name="Laudie M."/>
            <person name="Berger-Llauro C."/>
            <person name="Purnelle B."/>
            <person name="Masuy D."/>
            <person name="de Haan M."/>
            <person name="Maarse A.C."/>
            <person name="Alcaraz J.-P."/>
            <person name="Cottet A."/>
            <person name="Casacuberta E."/>
            <person name="Monfort A."/>
            <person name="Argiriou A."/>
            <person name="Flores M."/>
            <person name="Liguori R."/>
            <person name="Vitale D."/>
            <person name="Mannhaupt G."/>
            <person name="Haase D."/>
            <person name="Schoof H."/>
            <person name="Rudd S."/>
            <person name="Zaccaria P."/>
            <person name="Mewes H.-W."/>
            <person name="Mayer K.F.X."/>
            <person name="Kaul S."/>
            <person name="Town C.D."/>
            <person name="Koo H.L."/>
            <person name="Tallon L.J."/>
            <person name="Jenkins J."/>
            <person name="Rooney T."/>
            <person name="Rizzo M."/>
            <person name="Walts A."/>
            <person name="Utterback T."/>
            <person name="Fujii C.Y."/>
            <person name="Shea T.P."/>
            <person name="Creasy T.H."/>
            <person name="Haas B."/>
            <person name="Maiti R."/>
            <person name="Wu D."/>
            <person name="Peterson J."/>
            <person name="Van Aken S."/>
            <person name="Pai G."/>
            <person name="Militscher J."/>
            <person name="Sellers P."/>
            <person name="Gill J.E."/>
            <person name="Feldblyum T.V."/>
            <person name="Preuss D."/>
            <person name="Lin X."/>
            <person name="Nierman W.C."/>
            <person name="Salzberg S.L."/>
            <person name="White O."/>
            <person name="Venter J.C."/>
            <person name="Fraser C.M."/>
            <person name="Kaneko T."/>
            <person name="Nakamura Y."/>
            <person name="Sato S."/>
            <person name="Kato T."/>
            <person name="Asamizu E."/>
            <person name="Sasamoto S."/>
            <person name="Kimura T."/>
            <person name="Idesawa K."/>
            <person name="Kawashima K."/>
            <person name="Kishida Y."/>
            <person name="Kiyokawa C."/>
            <person name="Kohara M."/>
            <person name="Matsumoto M."/>
            <person name="Matsuno A."/>
            <person name="Muraki A."/>
            <person name="Nakayama S."/>
            <person name="Nakazaki N."/>
            <person name="Shinpo S."/>
            <person name="Takeuchi C."/>
            <person name="Wada T."/>
            <person name="Watanabe A."/>
            <person name="Yamada M."/>
            <person name="Yasuda M."/>
            <person name="Tabata S."/>
        </authorList>
    </citation>
    <scope>NUCLEOTIDE SEQUENCE [LARGE SCALE GENOMIC DNA]</scope>
    <source>
        <strain>cv. Columbia</strain>
    </source>
</reference>
<reference key="2">
    <citation type="journal article" date="2017" name="Plant J.">
        <title>Araport11: a complete reannotation of the Arabidopsis thaliana reference genome.</title>
        <authorList>
            <person name="Cheng C.Y."/>
            <person name="Krishnakumar V."/>
            <person name="Chan A.P."/>
            <person name="Thibaud-Nissen F."/>
            <person name="Schobel S."/>
            <person name="Town C.D."/>
        </authorList>
    </citation>
    <scope>GENOME REANNOTATION</scope>
    <source>
        <strain>cv. Columbia</strain>
    </source>
</reference>
<reference key="3">
    <citation type="journal article" date="2002" name="Plant Mol. Biol.">
        <title>Probing the diversity of the Arabidopsis glutathione S-transferase gene family.</title>
        <authorList>
            <person name="Wagner U."/>
            <person name="Edwards R."/>
            <person name="Dixon D.P."/>
            <person name="Mauch F."/>
        </authorList>
    </citation>
    <scope>GENE FAMILY</scope>
    <scope>NOMENCLATURE</scope>
</reference>
<organism>
    <name type="scientific">Arabidopsis thaliana</name>
    <name type="common">Mouse-ear cress</name>
    <dbReference type="NCBI Taxonomy" id="3702"/>
    <lineage>
        <taxon>Eukaryota</taxon>
        <taxon>Viridiplantae</taxon>
        <taxon>Streptophyta</taxon>
        <taxon>Embryophyta</taxon>
        <taxon>Tracheophyta</taxon>
        <taxon>Spermatophyta</taxon>
        <taxon>Magnoliopsida</taxon>
        <taxon>eudicotyledons</taxon>
        <taxon>Gunneridae</taxon>
        <taxon>Pentapetalae</taxon>
        <taxon>rosids</taxon>
        <taxon>malvids</taxon>
        <taxon>Brassicales</taxon>
        <taxon>Brassicaceae</taxon>
        <taxon>Camelineae</taxon>
        <taxon>Arabidopsis</taxon>
    </lineage>
</organism>
<feature type="chain" id="PRO_0000413546" description="Glutathione S-transferase F13">
    <location>
        <begin position="1"/>
        <end position="219"/>
    </location>
</feature>
<feature type="domain" description="GST N-terminal">
    <location>
        <begin position="2"/>
        <end position="82"/>
    </location>
</feature>
<feature type="domain" description="GST C-terminal">
    <location>
        <begin position="90"/>
        <end position="217"/>
    </location>
</feature>
<feature type="binding site" evidence="1">
    <location>
        <begin position="11"/>
        <end position="12"/>
    </location>
    <ligand>
        <name>glutathione</name>
        <dbReference type="ChEBI" id="CHEBI:57925"/>
    </ligand>
</feature>
<feature type="binding site" evidence="1">
    <location>
        <begin position="40"/>
        <end position="41"/>
    </location>
    <ligand>
        <name>glutathione</name>
        <dbReference type="ChEBI" id="CHEBI:57925"/>
    </ligand>
</feature>
<feature type="binding site" evidence="1">
    <location>
        <begin position="53"/>
        <end position="54"/>
    </location>
    <ligand>
        <name>glutathione</name>
        <dbReference type="ChEBI" id="CHEBI:57925"/>
    </ligand>
</feature>
<feature type="binding site" evidence="1">
    <location>
        <begin position="66"/>
        <end position="67"/>
    </location>
    <ligand>
        <name>glutathione</name>
        <dbReference type="ChEBI" id="CHEBI:57925"/>
    </ligand>
</feature>